<proteinExistence type="inferred from homology"/>
<protein>
    <recommendedName>
        <fullName evidence="1">Na(+)/H(+) antiporter NhaA</fullName>
    </recommendedName>
    <alternativeName>
        <fullName evidence="1">Sodium/proton antiporter NhaA</fullName>
    </alternativeName>
</protein>
<name>NHAA_SHEAM</name>
<keyword id="KW-0050">Antiport</keyword>
<keyword id="KW-0997">Cell inner membrane</keyword>
<keyword id="KW-1003">Cell membrane</keyword>
<keyword id="KW-0406">Ion transport</keyword>
<keyword id="KW-0472">Membrane</keyword>
<keyword id="KW-1185">Reference proteome</keyword>
<keyword id="KW-0915">Sodium</keyword>
<keyword id="KW-0739">Sodium transport</keyword>
<keyword id="KW-0812">Transmembrane</keyword>
<keyword id="KW-1133">Transmembrane helix</keyword>
<keyword id="KW-0813">Transport</keyword>
<comment type="function">
    <text evidence="1">Na(+)/H(+) antiporter that extrudes sodium in exchange for external protons.</text>
</comment>
<comment type="catalytic activity">
    <reaction evidence="1">
        <text>Na(+)(in) + 2 H(+)(out) = Na(+)(out) + 2 H(+)(in)</text>
        <dbReference type="Rhea" id="RHEA:29251"/>
        <dbReference type="ChEBI" id="CHEBI:15378"/>
        <dbReference type="ChEBI" id="CHEBI:29101"/>
    </reaction>
    <physiologicalReaction direction="left-to-right" evidence="1">
        <dbReference type="Rhea" id="RHEA:29252"/>
    </physiologicalReaction>
</comment>
<comment type="subcellular location">
    <subcellularLocation>
        <location evidence="1">Cell inner membrane</location>
        <topology evidence="1">Multi-pass membrane protein</topology>
    </subcellularLocation>
</comment>
<comment type="similarity">
    <text evidence="1">Belongs to the NhaA Na(+)/H(+) (TC 2.A.33) antiporter family.</text>
</comment>
<organism>
    <name type="scientific">Shewanella amazonensis (strain ATCC BAA-1098 / SB2B)</name>
    <dbReference type="NCBI Taxonomy" id="326297"/>
    <lineage>
        <taxon>Bacteria</taxon>
        <taxon>Pseudomonadati</taxon>
        <taxon>Pseudomonadota</taxon>
        <taxon>Gammaproteobacteria</taxon>
        <taxon>Alteromonadales</taxon>
        <taxon>Shewanellaceae</taxon>
        <taxon>Shewanella</taxon>
    </lineage>
</organism>
<reference key="1">
    <citation type="submission" date="2006-12" db="EMBL/GenBank/DDBJ databases">
        <title>Complete sequence of Shewanella amazonensis SB2B.</title>
        <authorList>
            <consortium name="US DOE Joint Genome Institute"/>
            <person name="Copeland A."/>
            <person name="Lucas S."/>
            <person name="Lapidus A."/>
            <person name="Barry K."/>
            <person name="Detter J.C."/>
            <person name="Glavina del Rio T."/>
            <person name="Hammon N."/>
            <person name="Israni S."/>
            <person name="Dalin E."/>
            <person name="Tice H."/>
            <person name="Pitluck S."/>
            <person name="Munk A.C."/>
            <person name="Brettin T."/>
            <person name="Bruce D."/>
            <person name="Han C."/>
            <person name="Tapia R."/>
            <person name="Gilna P."/>
            <person name="Schmutz J."/>
            <person name="Larimer F."/>
            <person name="Land M."/>
            <person name="Hauser L."/>
            <person name="Kyrpides N."/>
            <person name="Mikhailova N."/>
            <person name="Fredrickson J."/>
            <person name="Richardson P."/>
        </authorList>
    </citation>
    <scope>NUCLEOTIDE SEQUENCE [LARGE SCALE GENOMIC DNA]</scope>
    <source>
        <strain>ATCC BAA-1098 / SB2B</strain>
    </source>
</reference>
<accession>A1S3W9</accession>
<dbReference type="EMBL" id="CP000507">
    <property type="protein sequence ID" value="ABL99075.1"/>
    <property type="molecule type" value="Genomic_DNA"/>
</dbReference>
<dbReference type="RefSeq" id="WP_011758985.1">
    <property type="nucleotide sequence ID" value="NC_008700.1"/>
</dbReference>
<dbReference type="SMR" id="A1S3W9"/>
<dbReference type="STRING" id="326297.Sama_0868"/>
<dbReference type="KEGG" id="saz:Sama_0868"/>
<dbReference type="eggNOG" id="COG3004">
    <property type="taxonomic scope" value="Bacteria"/>
</dbReference>
<dbReference type="HOGENOM" id="CLU_015803_1_0_6"/>
<dbReference type="OrthoDB" id="9808135at2"/>
<dbReference type="Proteomes" id="UP000009175">
    <property type="component" value="Chromosome"/>
</dbReference>
<dbReference type="GO" id="GO:0005886">
    <property type="term" value="C:plasma membrane"/>
    <property type="evidence" value="ECO:0007669"/>
    <property type="project" value="UniProtKB-SubCell"/>
</dbReference>
<dbReference type="GO" id="GO:0015385">
    <property type="term" value="F:sodium:proton antiporter activity"/>
    <property type="evidence" value="ECO:0007669"/>
    <property type="project" value="TreeGrafter"/>
</dbReference>
<dbReference type="GO" id="GO:0006885">
    <property type="term" value="P:regulation of pH"/>
    <property type="evidence" value="ECO:0007669"/>
    <property type="project" value="InterPro"/>
</dbReference>
<dbReference type="Gene3D" id="1.20.1530.10">
    <property type="entry name" value="Na+/H+ antiporter like domain"/>
    <property type="match status" value="1"/>
</dbReference>
<dbReference type="HAMAP" id="MF_01844">
    <property type="entry name" value="NhaA"/>
    <property type="match status" value="1"/>
</dbReference>
<dbReference type="InterPro" id="IPR023171">
    <property type="entry name" value="Na/H_antiporter_dom_sf"/>
</dbReference>
<dbReference type="InterPro" id="IPR004670">
    <property type="entry name" value="NhaA"/>
</dbReference>
<dbReference type="NCBIfam" id="TIGR00773">
    <property type="entry name" value="NhaA"/>
    <property type="match status" value="1"/>
</dbReference>
<dbReference type="NCBIfam" id="NF007111">
    <property type="entry name" value="PRK09560.1"/>
    <property type="match status" value="1"/>
</dbReference>
<dbReference type="NCBIfam" id="NF007112">
    <property type="entry name" value="PRK09561.1"/>
    <property type="match status" value="1"/>
</dbReference>
<dbReference type="PANTHER" id="PTHR30341:SF0">
    <property type="entry name" value="NA(+)_H(+) ANTIPORTER NHAA"/>
    <property type="match status" value="1"/>
</dbReference>
<dbReference type="PANTHER" id="PTHR30341">
    <property type="entry name" value="SODIUM ION/PROTON ANTIPORTER NHAA-RELATED"/>
    <property type="match status" value="1"/>
</dbReference>
<dbReference type="Pfam" id="PF06965">
    <property type="entry name" value="Na_H_antiport_1"/>
    <property type="match status" value="1"/>
</dbReference>
<evidence type="ECO:0000255" key="1">
    <source>
        <dbReference type="HAMAP-Rule" id="MF_01844"/>
    </source>
</evidence>
<feature type="chain" id="PRO_0000334419" description="Na(+)/H(+) antiporter NhaA">
    <location>
        <begin position="1"/>
        <end position="391"/>
    </location>
</feature>
<feature type="transmembrane region" description="Helical" evidence="1">
    <location>
        <begin position="14"/>
        <end position="34"/>
    </location>
</feature>
<feature type="transmembrane region" description="Helical" evidence="1">
    <location>
        <begin position="59"/>
        <end position="79"/>
    </location>
</feature>
<feature type="transmembrane region" description="Helical" evidence="1">
    <location>
        <begin position="95"/>
        <end position="115"/>
    </location>
</feature>
<feature type="transmembrane region" description="Helical" evidence="1">
    <location>
        <begin position="124"/>
        <end position="144"/>
    </location>
</feature>
<feature type="transmembrane region" description="Helical" evidence="1">
    <location>
        <begin position="154"/>
        <end position="174"/>
    </location>
</feature>
<feature type="transmembrane region" description="Helical" evidence="1">
    <location>
        <begin position="177"/>
        <end position="197"/>
    </location>
</feature>
<feature type="transmembrane region" description="Helical" evidence="1">
    <location>
        <begin position="213"/>
        <end position="233"/>
    </location>
</feature>
<feature type="transmembrane region" description="Helical" evidence="1">
    <location>
        <begin position="261"/>
        <end position="281"/>
    </location>
</feature>
<feature type="transmembrane region" description="Helical" evidence="1">
    <location>
        <begin position="287"/>
        <end position="307"/>
    </location>
</feature>
<feature type="transmembrane region" description="Helical" evidence="1">
    <location>
        <begin position="328"/>
        <end position="348"/>
    </location>
</feature>
<feature type="transmembrane region" description="Helical" evidence="1">
    <location>
        <begin position="363"/>
        <end position="383"/>
    </location>
</feature>
<sequence>MEKAIRNFLSQESAGGILLLVAVALAMLLANSPLSGLYQGFLNTEMQVRFGALDINKPLLLWINDGLMALFFLLIGLEVKRELLEGALSSPSKASLPTFAAIGGMLVPAAIYLFFNFDDPVTKVGWAIPAATDIAFALGIMALLGNRVPVALKVFLLALAIIDDLGVIVIIALFYSTDLSMLSLVIAAIAVTGLVALNRKGVTSLAPYGVLGIILWIAVLKSGVHATLAGVVIAFCIPLRAKDGSSPSEHLEHSLHPWSNFLILPVFAFANAGVPLGNVGFDSILSPVPVGIALGLLLGKPIGVLLFSYAAVKLRLAELPKGIGWHQIAPVAVMCGIGFTMSMFIASLAFEHGGELYGDLARIGILLGSLFAAVIGYFWLSKVLPKAGERI</sequence>
<gene>
    <name evidence="1" type="primary">nhaA</name>
    <name type="ordered locus">Sama_0868</name>
</gene>